<geneLocation type="chloroplast"/>
<dbReference type="EMBL" id="DQ400350">
    <property type="protein sequence ID" value="ABD48483.1"/>
    <property type="molecule type" value="Genomic_DNA"/>
</dbReference>
<dbReference type="RefSeq" id="YP_001595496.1">
    <property type="nucleotide sequence ID" value="NC_010109.1"/>
</dbReference>
<dbReference type="SMR" id="A9L984"/>
<dbReference type="GeneID" id="5787543"/>
<dbReference type="GO" id="GO:0009535">
    <property type="term" value="C:chloroplast thylakoid membrane"/>
    <property type="evidence" value="ECO:0007669"/>
    <property type="project" value="UniProtKB-SubCell"/>
</dbReference>
<dbReference type="GO" id="GO:0005886">
    <property type="term" value="C:plasma membrane"/>
    <property type="evidence" value="ECO:0007669"/>
    <property type="project" value="UniProtKB-UniRule"/>
</dbReference>
<dbReference type="GO" id="GO:0045259">
    <property type="term" value="C:proton-transporting ATP synthase complex"/>
    <property type="evidence" value="ECO:0007669"/>
    <property type="project" value="UniProtKB-KW"/>
</dbReference>
<dbReference type="GO" id="GO:0046933">
    <property type="term" value="F:proton-transporting ATP synthase activity, rotational mechanism"/>
    <property type="evidence" value="ECO:0007669"/>
    <property type="project" value="UniProtKB-UniRule"/>
</dbReference>
<dbReference type="CDD" id="cd00310">
    <property type="entry name" value="ATP-synt_Fo_a_6"/>
    <property type="match status" value="1"/>
</dbReference>
<dbReference type="FunFam" id="1.20.120.220:FF:000001">
    <property type="entry name" value="ATP synthase subunit a, chloroplastic"/>
    <property type="match status" value="1"/>
</dbReference>
<dbReference type="Gene3D" id="1.20.120.220">
    <property type="entry name" value="ATP synthase, F0 complex, subunit A"/>
    <property type="match status" value="1"/>
</dbReference>
<dbReference type="HAMAP" id="MF_01393">
    <property type="entry name" value="ATP_synth_a_bact"/>
    <property type="match status" value="1"/>
</dbReference>
<dbReference type="InterPro" id="IPR045082">
    <property type="entry name" value="ATP_syn_F0_a_bact/chloroplast"/>
</dbReference>
<dbReference type="InterPro" id="IPR000568">
    <property type="entry name" value="ATP_synth_F0_asu"/>
</dbReference>
<dbReference type="InterPro" id="IPR023011">
    <property type="entry name" value="ATP_synth_F0_asu_AS"/>
</dbReference>
<dbReference type="InterPro" id="IPR035908">
    <property type="entry name" value="F0_ATP_A_sf"/>
</dbReference>
<dbReference type="NCBIfam" id="TIGR01131">
    <property type="entry name" value="ATP_synt_6_or_A"/>
    <property type="match status" value="1"/>
</dbReference>
<dbReference type="PANTHER" id="PTHR42823">
    <property type="entry name" value="ATP SYNTHASE SUBUNIT A, CHLOROPLASTIC"/>
    <property type="match status" value="1"/>
</dbReference>
<dbReference type="PANTHER" id="PTHR42823:SF3">
    <property type="entry name" value="ATP SYNTHASE SUBUNIT A, CHLOROPLASTIC"/>
    <property type="match status" value="1"/>
</dbReference>
<dbReference type="Pfam" id="PF00119">
    <property type="entry name" value="ATP-synt_A"/>
    <property type="match status" value="1"/>
</dbReference>
<dbReference type="PRINTS" id="PR00123">
    <property type="entry name" value="ATPASEA"/>
</dbReference>
<dbReference type="SUPFAM" id="SSF81336">
    <property type="entry name" value="F1F0 ATP synthase subunit A"/>
    <property type="match status" value="1"/>
</dbReference>
<dbReference type="PROSITE" id="PS00449">
    <property type="entry name" value="ATPASE_A"/>
    <property type="match status" value="1"/>
</dbReference>
<name>ATPI_LEMMI</name>
<accession>A9L984</accession>
<evidence type="ECO:0000255" key="1">
    <source>
        <dbReference type="HAMAP-Rule" id="MF_01393"/>
    </source>
</evidence>
<protein>
    <recommendedName>
        <fullName evidence="1">ATP synthase subunit a, chloroplastic</fullName>
    </recommendedName>
    <alternativeName>
        <fullName evidence="1">ATP synthase F0 sector subunit a</fullName>
    </alternativeName>
    <alternativeName>
        <fullName evidence="1">F-ATPase subunit IV</fullName>
    </alternativeName>
</protein>
<reference key="1">
    <citation type="journal article" date="2008" name="J. Mol. Evol.">
        <title>Complete sequence of the Duckweed (Lemna minor) chloroplast genome: structural organization and phylogenetic relationships to other angiosperms.</title>
        <authorList>
            <person name="Mardanov A.V."/>
            <person name="Ravin N.V."/>
            <person name="Kuznetsov B.B."/>
            <person name="Samigullin T.H."/>
            <person name="Antonov A.S."/>
            <person name="Kolganova T.V."/>
            <person name="Skyabin K.G."/>
        </authorList>
    </citation>
    <scope>NUCLEOTIDE SEQUENCE [LARGE SCALE GENOMIC DNA]</scope>
</reference>
<comment type="function">
    <text evidence="1">Key component of the proton channel; it plays a direct role in the translocation of protons across the membrane.</text>
</comment>
<comment type="subunit">
    <text evidence="1">F-type ATPases have 2 components, CF(1) - the catalytic core - and CF(0) - the membrane proton channel. CF(1) has five subunits: alpha(3), beta(3), gamma(1), delta(1), epsilon(1). CF(0) has four main subunits: a, b, b' and c.</text>
</comment>
<comment type="subcellular location">
    <subcellularLocation>
        <location evidence="1">Plastid</location>
        <location evidence="1">Chloroplast thylakoid membrane</location>
        <topology evidence="1">Multi-pass membrane protein</topology>
    </subcellularLocation>
</comment>
<comment type="similarity">
    <text evidence="1">Belongs to the ATPase A chain family.</text>
</comment>
<organism>
    <name type="scientific">Lemna minor</name>
    <name type="common">Common duckweed</name>
    <dbReference type="NCBI Taxonomy" id="4472"/>
    <lineage>
        <taxon>Eukaryota</taxon>
        <taxon>Viridiplantae</taxon>
        <taxon>Streptophyta</taxon>
        <taxon>Embryophyta</taxon>
        <taxon>Tracheophyta</taxon>
        <taxon>Spermatophyta</taxon>
        <taxon>Magnoliopsida</taxon>
        <taxon>Liliopsida</taxon>
        <taxon>Araceae</taxon>
        <taxon>Lemnoideae</taxon>
        <taxon>Lemna</taxon>
    </lineage>
</organism>
<gene>
    <name evidence="1" type="primary">atpI</name>
</gene>
<keyword id="KW-0066">ATP synthesis</keyword>
<keyword id="KW-0138">CF(0)</keyword>
<keyword id="KW-0150">Chloroplast</keyword>
<keyword id="KW-0375">Hydrogen ion transport</keyword>
<keyword id="KW-0406">Ion transport</keyword>
<keyword id="KW-0472">Membrane</keyword>
<keyword id="KW-0934">Plastid</keyword>
<keyword id="KW-0793">Thylakoid</keyword>
<keyword id="KW-0812">Transmembrane</keyword>
<keyword id="KW-1133">Transmembrane helix</keyword>
<keyword id="KW-0813">Transport</keyword>
<sequence length="247" mass="27093">MNVIPCSINTLKGLYDISGVEVGQHLYWQIGGLQVHAQVLITSWVVIAILLGSVTLAVRNPQTIPADGQNFFEYLLEFIRDLSKTQIGEEYGPWVPFIGTMFLFIFVSNWSGALLPWKIIQLPHGELAAPTNDINTTVALALLTSVAYFYAGLSKKGLSYFGKYIQPTPILLPINILEDFTKPLSLSFRLFGNILADELVVVVLVSLVPLVVPIPVMFLGLFTSGIQALIFATLAAAYIGESMEGHH</sequence>
<proteinExistence type="inferred from homology"/>
<feature type="chain" id="PRO_0000362566" description="ATP synthase subunit a, chloroplastic">
    <location>
        <begin position="1"/>
        <end position="247"/>
    </location>
</feature>
<feature type="transmembrane region" description="Helical" evidence="1">
    <location>
        <begin position="38"/>
        <end position="58"/>
    </location>
</feature>
<feature type="transmembrane region" description="Helical" evidence="1">
    <location>
        <begin position="95"/>
        <end position="115"/>
    </location>
</feature>
<feature type="transmembrane region" description="Helical" evidence="1">
    <location>
        <begin position="134"/>
        <end position="154"/>
    </location>
</feature>
<feature type="transmembrane region" description="Helical" evidence="1">
    <location>
        <begin position="199"/>
        <end position="219"/>
    </location>
</feature>
<feature type="transmembrane region" description="Helical" evidence="1">
    <location>
        <begin position="220"/>
        <end position="240"/>
    </location>
</feature>